<proteinExistence type="evidence at transcript level"/>
<feature type="signal peptide" evidence="1">
    <location>
        <begin position="1"/>
        <end position="16"/>
    </location>
</feature>
<feature type="chain" id="PRO_0000014192" description="Uncharacterized serine-rich protein C1E8.05">
    <location>
        <begin position="17"/>
        <end position="317"/>
    </location>
</feature>
<feature type="region of interest" description="Disordered" evidence="2">
    <location>
        <begin position="150"/>
        <end position="259"/>
    </location>
</feature>
<feature type="compositionally biased region" description="Low complexity" evidence="2">
    <location>
        <begin position="150"/>
        <end position="238"/>
    </location>
</feature>
<feature type="compositionally biased region" description="Low complexity" evidence="2">
    <location>
        <begin position="247"/>
        <end position="259"/>
    </location>
</feature>
<feature type="glycosylation site" description="N-linked (GlcNAc...) asparagine" evidence="1">
    <location>
        <position position="42"/>
    </location>
</feature>
<feature type="sequence conflict" description="In Ref. 2; BAA13766." evidence="3" ref="2">
    <original>S</original>
    <variation>K</variation>
    <location>
        <position position="124"/>
    </location>
</feature>
<feature type="sequence conflict" description="In Ref. 2; BAA13766." evidence="3" ref="2">
    <original>L</original>
    <variation>LIVVS</variation>
    <location>
        <position position="317"/>
    </location>
</feature>
<gene>
    <name type="ORF">SPBC1E8.05</name>
</gene>
<keyword id="KW-0325">Glycoprotein</keyword>
<keyword id="KW-1185">Reference proteome</keyword>
<keyword id="KW-0732">Signal</keyword>
<reference key="1">
    <citation type="journal article" date="2002" name="Nature">
        <title>The genome sequence of Schizosaccharomyces pombe.</title>
        <authorList>
            <person name="Wood V."/>
            <person name="Gwilliam R."/>
            <person name="Rajandream M.A."/>
            <person name="Lyne M.H."/>
            <person name="Lyne R."/>
            <person name="Stewart A."/>
            <person name="Sgouros J.G."/>
            <person name="Peat N."/>
            <person name="Hayles J."/>
            <person name="Baker S.G."/>
            <person name="Basham D."/>
            <person name="Bowman S."/>
            <person name="Brooks K."/>
            <person name="Brown D."/>
            <person name="Brown S."/>
            <person name="Chillingworth T."/>
            <person name="Churcher C.M."/>
            <person name="Collins M."/>
            <person name="Connor R."/>
            <person name="Cronin A."/>
            <person name="Davis P."/>
            <person name="Feltwell T."/>
            <person name="Fraser A."/>
            <person name="Gentles S."/>
            <person name="Goble A."/>
            <person name="Hamlin N."/>
            <person name="Harris D.E."/>
            <person name="Hidalgo J."/>
            <person name="Hodgson G."/>
            <person name="Holroyd S."/>
            <person name="Hornsby T."/>
            <person name="Howarth S."/>
            <person name="Huckle E.J."/>
            <person name="Hunt S."/>
            <person name="Jagels K."/>
            <person name="James K.D."/>
            <person name="Jones L."/>
            <person name="Jones M."/>
            <person name="Leather S."/>
            <person name="McDonald S."/>
            <person name="McLean J."/>
            <person name="Mooney P."/>
            <person name="Moule S."/>
            <person name="Mungall K.L."/>
            <person name="Murphy L.D."/>
            <person name="Niblett D."/>
            <person name="Odell C."/>
            <person name="Oliver K."/>
            <person name="O'Neil S."/>
            <person name="Pearson D."/>
            <person name="Quail M.A."/>
            <person name="Rabbinowitsch E."/>
            <person name="Rutherford K.M."/>
            <person name="Rutter S."/>
            <person name="Saunders D."/>
            <person name="Seeger K."/>
            <person name="Sharp S."/>
            <person name="Skelton J."/>
            <person name="Simmonds M.N."/>
            <person name="Squares R."/>
            <person name="Squares S."/>
            <person name="Stevens K."/>
            <person name="Taylor K."/>
            <person name="Taylor R.G."/>
            <person name="Tivey A."/>
            <person name="Walsh S.V."/>
            <person name="Warren T."/>
            <person name="Whitehead S."/>
            <person name="Woodward J.R."/>
            <person name="Volckaert G."/>
            <person name="Aert R."/>
            <person name="Robben J."/>
            <person name="Grymonprez B."/>
            <person name="Weltjens I."/>
            <person name="Vanstreels E."/>
            <person name="Rieger M."/>
            <person name="Schaefer M."/>
            <person name="Mueller-Auer S."/>
            <person name="Gabel C."/>
            <person name="Fuchs M."/>
            <person name="Duesterhoeft A."/>
            <person name="Fritzc C."/>
            <person name="Holzer E."/>
            <person name="Moestl D."/>
            <person name="Hilbert H."/>
            <person name="Borzym K."/>
            <person name="Langer I."/>
            <person name="Beck A."/>
            <person name="Lehrach H."/>
            <person name="Reinhardt R."/>
            <person name="Pohl T.M."/>
            <person name="Eger P."/>
            <person name="Zimmermann W."/>
            <person name="Wedler H."/>
            <person name="Wambutt R."/>
            <person name="Purnelle B."/>
            <person name="Goffeau A."/>
            <person name="Cadieu E."/>
            <person name="Dreano S."/>
            <person name="Gloux S."/>
            <person name="Lelaure V."/>
            <person name="Mottier S."/>
            <person name="Galibert F."/>
            <person name="Aves S.J."/>
            <person name="Xiang Z."/>
            <person name="Hunt C."/>
            <person name="Moore K."/>
            <person name="Hurst S.M."/>
            <person name="Lucas M."/>
            <person name="Rochet M."/>
            <person name="Gaillardin C."/>
            <person name="Tallada V.A."/>
            <person name="Garzon A."/>
            <person name="Thode G."/>
            <person name="Daga R.R."/>
            <person name="Cruzado L."/>
            <person name="Jimenez J."/>
            <person name="Sanchez M."/>
            <person name="del Rey F."/>
            <person name="Benito J."/>
            <person name="Dominguez A."/>
            <person name="Revuelta J.L."/>
            <person name="Moreno S."/>
            <person name="Armstrong J."/>
            <person name="Forsburg S.L."/>
            <person name="Cerutti L."/>
            <person name="Lowe T."/>
            <person name="McCombie W.R."/>
            <person name="Paulsen I."/>
            <person name="Potashkin J."/>
            <person name="Shpakovski G.V."/>
            <person name="Ussery D."/>
            <person name="Barrell B.G."/>
            <person name="Nurse P."/>
        </authorList>
    </citation>
    <scope>NUCLEOTIDE SEQUENCE [LARGE SCALE GENOMIC DNA]</scope>
    <source>
        <strain>972 / ATCC 24843</strain>
    </source>
</reference>
<reference key="2">
    <citation type="journal article" date="1997" name="DNA Res.">
        <title>Identification of open reading frames in Schizosaccharomyces pombe cDNAs.</title>
        <authorList>
            <person name="Yoshioka S."/>
            <person name="Kato K."/>
            <person name="Nakai K."/>
            <person name="Okayama H."/>
            <person name="Nojima H."/>
        </authorList>
    </citation>
    <scope>NUCLEOTIDE SEQUENCE [LARGE SCALE MRNA] OF 6-317</scope>
    <source>
        <strain>PR745</strain>
    </source>
</reference>
<protein>
    <recommendedName>
        <fullName>Uncharacterized serine-rich protein C1E8.05</fullName>
    </recommendedName>
</protein>
<name>YB95_SCHPO</name>
<sequence>MKLSFILSTLVAGALAYNEFSAPGPNAVLQEGGGVNTVSWSNLTSSTVTLTLYRGGNSALTPIETIASDIDNTGTYLWNIATYYEAADDYLLGLSFDGGETYSQYFTLQACSTCTISTSSLSYSGTISSTSIAPSMIGTRTSSSYFITSSSSTPSSSSSSSSSSPSSSSSKSSSSSKSSSSSSSSSKSSSSSSSSSKSSSSSSSSSKSSASPSSSKSSSKFSSSSFITSTTPASSSSSGAIVSNAKTASTDDSSSASSATSSVSSVVSSASSALSASASSASASVSSSASSDASPALKTGINALVAVGVVSAIALFL</sequence>
<evidence type="ECO:0000255" key="1"/>
<evidence type="ECO:0000256" key="2">
    <source>
        <dbReference type="SAM" id="MobiDB-lite"/>
    </source>
</evidence>
<evidence type="ECO:0000305" key="3"/>
<dbReference type="EMBL" id="CU329671">
    <property type="protein sequence ID" value="CAA16838.1"/>
    <property type="molecule type" value="Genomic_DNA"/>
</dbReference>
<dbReference type="EMBL" id="D89103">
    <property type="protein sequence ID" value="BAA13766.1"/>
    <property type="molecule type" value="mRNA"/>
</dbReference>
<dbReference type="PIR" id="T39869">
    <property type="entry name" value="T39869"/>
</dbReference>
<dbReference type="BioGRID" id="277079">
    <property type="interactions" value="4"/>
</dbReference>
<dbReference type="STRING" id="284812.O42970"/>
<dbReference type="iPTMnet" id="O42970"/>
<dbReference type="PaxDb" id="4896-SPBC1E8.05.1"/>
<dbReference type="EnsemblFungi" id="SPBC1E8.05.1">
    <property type="protein sequence ID" value="SPBC1E8.05.1:pep"/>
    <property type="gene ID" value="SPBC1E8.05"/>
</dbReference>
<dbReference type="KEGG" id="spo:2540552"/>
<dbReference type="PomBase" id="SPBC1E8.05"/>
<dbReference type="VEuPathDB" id="FungiDB:SPBC1E8.05"/>
<dbReference type="eggNOG" id="ENOG502SB54">
    <property type="taxonomic scope" value="Eukaryota"/>
</dbReference>
<dbReference type="HOGENOM" id="CLU_086129_0_0_1"/>
<dbReference type="InParanoid" id="O42970"/>
<dbReference type="OMA" id="NTGTYGW"/>
<dbReference type="PRO" id="PR:O42970"/>
<dbReference type="Proteomes" id="UP000002485">
    <property type="component" value="Chromosome II"/>
</dbReference>
<dbReference type="GO" id="GO:0009986">
    <property type="term" value="C:cell surface"/>
    <property type="evidence" value="ECO:0000304"/>
    <property type="project" value="PomBase"/>
</dbReference>
<dbReference type="InterPro" id="IPR018466">
    <property type="entry name" value="Kre9/Knh1-like_N"/>
</dbReference>
<dbReference type="InterPro" id="IPR052982">
    <property type="entry name" value="SRP1/TIP1-like"/>
</dbReference>
<dbReference type="PANTHER" id="PTHR40633:SF1">
    <property type="entry name" value="GPI ANCHORED SERINE-THREONINE RICH PROTEIN (AFU_ORTHOLOGUE AFUA_1G03630)"/>
    <property type="match status" value="1"/>
</dbReference>
<dbReference type="PANTHER" id="PTHR40633">
    <property type="entry name" value="MATRIX PROTEIN, PUTATIVE (AFU_ORTHOLOGUE AFUA_8G05410)-RELATED"/>
    <property type="match status" value="1"/>
</dbReference>
<dbReference type="Pfam" id="PF10342">
    <property type="entry name" value="Kre9_KNH"/>
    <property type="match status" value="1"/>
</dbReference>
<accession>O42970</accession>
<accession>P78755</accession>
<organism>
    <name type="scientific">Schizosaccharomyces pombe (strain 972 / ATCC 24843)</name>
    <name type="common">Fission yeast</name>
    <dbReference type="NCBI Taxonomy" id="284812"/>
    <lineage>
        <taxon>Eukaryota</taxon>
        <taxon>Fungi</taxon>
        <taxon>Dikarya</taxon>
        <taxon>Ascomycota</taxon>
        <taxon>Taphrinomycotina</taxon>
        <taxon>Schizosaccharomycetes</taxon>
        <taxon>Schizosaccharomycetales</taxon>
        <taxon>Schizosaccharomycetaceae</taxon>
        <taxon>Schizosaccharomyces</taxon>
    </lineage>
</organism>